<accession>Q1QL77</accession>
<name>CLPX_NITHX</name>
<reference key="1">
    <citation type="submission" date="2006-03" db="EMBL/GenBank/DDBJ databases">
        <title>Complete sequence of chromosome of Nitrobacter hamburgensis X14.</title>
        <authorList>
            <consortium name="US DOE Joint Genome Institute"/>
            <person name="Copeland A."/>
            <person name="Lucas S."/>
            <person name="Lapidus A."/>
            <person name="Barry K."/>
            <person name="Detter J.C."/>
            <person name="Glavina del Rio T."/>
            <person name="Hammon N."/>
            <person name="Israni S."/>
            <person name="Dalin E."/>
            <person name="Tice H."/>
            <person name="Pitluck S."/>
            <person name="Chain P."/>
            <person name="Malfatti S."/>
            <person name="Shin M."/>
            <person name="Vergez L."/>
            <person name="Schmutz J."/>
            <person name="Larimer F."/>
            <person name="Land M."/>
            <person name="Hauser L."/>
            <person name="Kyrpides N."/>
            <person name="Ivanova N."/>
            <person name="Ward B."/>
            <person name="Arp D."/>
            <person name="Klotz M."/>
            <person name="Stein L."/>
            <person name="O'Mullan G."/>
            <person name="Starkenburg S."/>
            <person name="Sayavedra L."/>
            <person name="Poret-Peterson A.T."/>
            <person name="Gentry M.E."/>
            <person name="Bruce D."/>
            <person name="Richardson P."/>
        </authorList>
    </citation>
    <scope>NUCLEOTIDE SEQUENCE [LARGE SCALE GENOMIC DNA]</scope>
    <source>
        <strain>DSM 10229 / NCIMB 13809 / X14</strain>
    </source>
</reference>
<sequence>MSKVGTGDSKNTLYCSFCGKSQHEVRKLIAGPTVFICDECVELCMDIIREENKSSLVKSRDGIPTPKEICKVLDDYVIGQGHAKKVLSVAVHNHYKRLNHQTKHNDVELAKSNILLIGPTGSGKTLLAQTLARILDVPFTMADATTLTEAGYVGEDVENIILKLLQSADYNVERAQRGIVYIDEIDKISRKSDNPSITRDVSGEGVQQALLKIMEGTVASVPPQGGRKHPQQEFLQVDTTNILFICGGAFSGLEKIISARGRTTSIGFAAQVLAPEDRRTGEIFRHVEPEDLLKYGLIPEFVGRLPVVATLEDLDEASLKKILTDPKNALVKQYQRLFEMENIELTFADEALGAIARKAIERKTGARGLRSILESILLETMFDLPGLEGVEEVVISREVVEGTARPLYIYADRSDRASETSASA</sequence>
<protein>
    <recommendedName>
        <fullName evidence="1">ATP-dependent Clp protease ATP-binding subunit ClpX</fullName>
    </recommendedName>
</protein>
<dbReference type="EMBL" id="CP000319">
    <property type="protein sequence ID" value="ABE63020.1"/>
    <property type="molecule type" value="Genomic_DNA"/>
</dbReference>
<dbReference type="RefSeq" id="WP_011510697.1">
    <property type="nucleotide sequence ID" value="NC_007964.1"/>
</dbReference>
<dbReference type="SMR" id="Q1QL77"/>
<dbReference type="STRING" id="323097.Nham_2228"/>
<dbReference type="KEGG" id="nha:Nham_2228"/>
<dbReference type="eggNOG" id="COG1219">
    <property type="taxonomic scope" value="Bacteria"/>
</dbReference>
<dbReference type="HOGENOM" id="CLU_014218_8_2_5"/>
<dbReference type="OrthoDB" id="9804062at2"/>
<dbReference type="Proteomes" id="UP000001953">
    <property type="component" value="Chromosome"/>
</dbReference>
<dbReference type="GO" id="GO:0009376">
    <property type="term" value="C:HslUV protease complex"/>
    <property type="evidence" value="ECO:0007669"/>
    <property type="project" value="TreeGrafter"/>
</dbReference>
<dbReference type="GO" id="GO:0005524">
    <property type="term" value="F:ATP binding"/>
    <property type="evidence" value="ECO:0007669"/>
    <property type="project" value="UniProtKB-UniRule"/>
</dbReference>
<dbReference type="GO" id="GO:0016887">
    <property type="term" value="F:ATP hydrolysis activity"/>
    <property type="evidence" value="ECO:0007669"/>
    <property type="project" value="InterPro"/>
</dbReference>
<dbReference type="GO" id="GO:0140662">
    <property type="term" value="F:ATP-dependent protein folding chaperone"/>
    <property type="evidence" value="ECO:0007669"/>
    <property type="project" value="InterPro"/>
</dbReference>
<dbReference type="GO" id="GO:0046983">
    <property type="term" value="F:protein dimerization activity"/>
    <property type="evidence" value="ECO:0007669"/>
    <property type="project" value="InterPro"/>
</dbReference>
<dbReference type="GO" id="GO:0051082">
    <property type="term" value="F:unfolded protein binding"/>
    <property type="evidence" value="ECO:0007669"/>
    <property type="project" value="UniProtKB-UniRule"/>
</dbReference>
<dbReference type="GO" id="GO:0008270">
    <property type="term" value="F:zinc ion binding"/>
    <property type="evidence" value="ECO:0007669"/>
    <property type="project" value="InterPro"/>
</dbReference>
<dbReference type="GO" id="GO:0051301">
    <property type="term" value="P:cell division"/>
    <property type="evidence" value="ECO:0007669"/>
    <property type="project" value="TreeGrafter"/>
</dbReference>
<dbReference type="GO" id="GO:0051603">
    <property type="term" value="P:proteolysis involved in protein catabolic process"/>
    <property type="evidence" value="ECO:0007669"/>
    <property type="project" value="TreeGrafter"/>
</dbReference>
<dbReference type="CDD" id="cd19497">
    <property type="entry name" value="RecA-like_ClpX"/>
    <property type="match status" value="1"/>
</dbReference>
<dbReference type="FunFam" id="1.10.8.60:FF:000002">
    <property type="entry name" value="ATP-dependent Clp protease ATP-binding subunit ClpX"/>
    <property type="match status" value="1"/>
</dbReference>
<dbReference type="FunFam" id="3.40.50.300:FF:000005">
    <property type="entry name" value="ATP-dependent Clp protease ATP-binding subunit ClpX"/>
    <property type="match status" value="1"/>
</dbReference>
<dbReference type="Gene3D" id="1.10.8.60">
    <property type="match status" value="1"/>
</dbReference>
<dbReference type="Gene3D" id="6.20.220.10">
    <property type="entry name" value="ClpX chaperone, C4-type zinc finger domain"/>
    <property type="match status" value="1"/>
</dbReference>
<dbReference type="Gene3D" id="3.40.50.300">
    <property type="entry name" value="P-loop containing nucleotide triphosphate hydrolases"/>
    <property type="match status" value="1"/>
</dbReference>
<dbReference type="HAMAP" id="MF_00175">
    <property type="entry name" value="ClpX"/>
    <property type="match status" value="1"/>
</dbReference>
<dbReference type="InterPro" id="IPR003593">
    <property type="entry name" value="AAA+_ATPase"/>
</dbReference>
<dbReference type="InterPro" id="IPR050052">
    <property type="entry name" value="ATP-dep_Clp_protease_ClpX"/>
</dbReference>
<dbReference type="InterPro" id="IPR003959">
    <property type="entry name" value="ATPase_AAA_core"/>
</dbReference>
<dbReference type="InterPro" id="IPR019489">
    <property type="entry name" value="Clp_ATPase_C"/>
</dbReference>
<dbReference type="InterPro" id="IPR004487">
    <property type="entry name" value="Clp_protease_ATP-bd_su_ClpX"/>
</dbReference>
<dbReference type="InterPro" id="IPR046425">
    <property type="entry name" value="ClpX_bact"/>
</dbReference>
<dbReference type="InterPro" id="IPR027417">
    <property type="entry name" value="P-loop_NTPase"/>
</dbReference>
<dbReference type="InterPro" id="IPR010603">
    <property type="entry name" value="Znf_CppX_C4"/>
</dbReference>
<dbReference type="InterPro" id="IPR038366">
    <property type="entry name" value="Znf_CppX_C4_sf"/>
</dbReference>
<dbReference type="NCBIfam" id="TIGR00382">
    <property type="entry name" value="clpX"/>
    <property type="match status" value="1"/>
</dbReference>
<dbReference type="NCBIfam" id="NF003745">
    <property type="entry name" value="PRK05342.1"/>
    <property type="match status" value="1"/>
</dbReference>
<dbReference type="PANTHER" id="PTHR48102:SF7">
    <property type="entry name" value="ATP-DEPENDENT CLP PROTEASE ATP-BINDING SUBUNIT CLPX-LIKE, MITOCHONDRIAL"/>
    <property type="match status" value="1"/>
</dbReference>
<dbReference type="PANTHER" id="PTHR48102">
    <property type="entry name" value="ATP-DEPENDENT CLP PROTEASE ATP-BINDING SUBUNIT CLPX-LIKE, MITOCHONDRIAL-RELATED"/>
    <property type="match status" value="1"/>
</dbReference>
<dbReference type="Pfam" id="PF07724">
    <property type="entry name" value="AAA_2"/>
    <property type="match status" value="1"/>
</dbReference>
<dbReference type="Pfam" id="PF10431">
    <property type="entry name" value="ClpB_D2-small"/>
    <property type="match status" value="1"/>
</dbReference>
<dbReference type="Pfam" id="PF06689">
    <property type="entry name" value="zf-C4_ClpX"/>
    <property type="match status" value="1"/>
</dbReference>
<dbReference type="SMART" id="SM00382">
    <property type="entry name" value="AAA"/>
    <property type="match status" value="1"/>
</dbReference>
<dbReference type="SMART" id="SM01086">
    <property type="entry name" value="ClpB_D2-small"/>
    <property type="match status" value="1"/>
</dbReference>
<dbReference type="SMART" id="SM00994">
    <property type="entry name" value="zf-C4_ClpX"/>
    <property type="match status" value="1"/>
</dbReference>
<dbReference type="SUPFAM" id="SSF57716">
    <property type="entry name" value="Glucocorticoid receptor-like (DNA-binding domain)"/>
    <property type="match status" value="1"/>
</dbReference>
<dbReference type="SUPFAM" id="SSF52540">
    <property type="entry name" value="P-loop containing nucleoside triphosphate hydrolases"/>
    <property type="match status" value="1"/>
</dbReference>
<dbReference type="PROSITE" id="PS51902">
    <property type="entry name" value="CLPX_ZB"/>
    <property type="match status" value="1"/>
</dbReference>
<feature type="chain" id="PRO_1000024598" description="ATP-dependent Clp protease ATP-binding subunit ClpX">
    <location>
        <begin position="1"/>
        <end position="424"/>
    </location>
</feature>
<feature type="domain" description="ClpX-type ZB" evidence="2">
    <location>
        <begin position="3"/>
        <end position="56"/>
    </location>
</feature>
<feature type="binding site" evidence="2">
    <location>
        <position position="15"/>
    </location>
    <ligand>
        <name>Zn(2+)</name>
        <dbReference type="ChEBI" id="CHEBI:29105"/>
    </ligand>
</feature>
<feature type="binding site" evidence="2">
    <location>
        <position position="18"/>
    </location>
    <ligand>
        <name>Zn(2+)</name>
        <dbReference type="ChEBI" id="CHEBI:29105"/>
    </ligand>
</feature>
<feature type="binding site" evidence="2">
    <location>
        <position position="37"/>
    </location>
    <ligand>
        <name>Zn(2+)</name>
        <dbReference type="ChEBI" id="CHEBI:29105"/>
    </ligand>
</feature>
<feature type="binding site" evidence="2">
    <location>
        <position position="40"/>
    </location>
    <ligand>
        <name>Zn(2+)</name>
        <dbReference type="ChEBI" id="CHEBI:29105"/>
    </ligand>
</feature>
<feature type="binding site" evidence="1">
    <location>
        <begin position="119"/>
        <end position="126"/>
    </location>
    <ligand>
        <name>ATP</name>
        <dbReference type="ChEBI" id="CHEBI:30616"/>
    </ligand>
</feature>
<proteinExistence type="inferred from homology"/>
<keyword id="KW-0067">ATP-binding</keyword>
<keyword id="KW-0143">Chaperone</keyword>
<keyword id="KW-0479">Metal-binding</keyword>
<keyword id="KW-0547">Nucleotide-binding</keyword>
<keyword id="KW-1185">Reference proteome</keyword>
<keyword id="KW-0862">Zinc</keyword>
<organism>
    <name type="scientific">Nitrobacter hamburgensis (strain DSM 10229 / NCIMB 13809 / X14)</name>
    <dbReference type="NCBI Taxonomy" id="323097"/>
    <lineage>
        <taxon>Bacteria</taxon>
        <taxon>Pseudomonadati</taxon>
        <taxon>Pseudomonadota</taxon>
        <taxon>Alphaproteobacteria</taxon>
        <taxon>Hyphomicrobiales</taxon>
        <taxon>Nitrobacteraceae</taxon>
        <taxon>Nitrobacter</taxon>
    </lineage>
</organism>
<comment type="function">
    <text evidence="1">ATP-dependent specificity component of the Clp protease. It directs the protease to specific substrates. Can perform chaperone functions in the absence of ClpP.</text>
</comment>
<comment type="subunit">
    <text evidence="1">Component of the ClpX-ClpP complex. Forms a hexameric ring that, in the presence of ATP, binds to fourteen ClpP subunits assembled into a disk-like structure with a central cavity, resembling the structure of eukaryotic proteasomes.</text>
</comment>
<comment type="similarity">
    <text evidence="1">Belongs to the ClpX chaperone family.</text>
</comment>
<evidence type="ECO:0000255" key="1">
    <source>
        <dbReference type="HAMAP-Rule" id="MF_00175"/>
    </source>
</evidence>
<evidence type="ECO:0000255" key="2">
    <source>
        <dbReference type="PROSITE-ProRule" id="PRU01250"/>
    </source>
</evidence>
<gene>
    <name evidence="1" type="primary">clpX</name>
    <name type="ordered locus">Nham_2228</name>
</gene>